<organism>
    <name type="scientific">Pseudomonas paraeruginosa (strain DSM 24068 / PA7)</name>
    <name type="common">Pseudomonas aeruginosa (strain PA7)</name>
    <dbReference type="NCBI Taxonomy" id="381754"/>
    <lineage>
        <taxon>Bacteria</taxon>
        <taxon>Pseudomonadati</taxon>
        <taxon>Pseudomonadota</taxon>
        <taxon>Gammaproteobacteria</taxon>
        <taxon>Pseudomonadales</taxon>
        <taxon>Pseudomonadaceae</taxon>
        <taxon>Pseudomonas</taxon>
        <taxon>Pseudomonas paraeruginosa</taxon>
    </lineage>
</organism>
<dbReference type="EC" id="6.3.2.2" evidence="1"/>
<dbReference type="EMBL" id="CP000744">
    <property type="protein sequence ID" value="ABR85739.1"/>
    <property type="molecule type" value="Genomic_DNA"/>
</dbReference>
<dbReference type="RefSeq" id="WP_012075878.1">
    <property type="nucleotide sequence ID" value="NC_009656.1"/>
</dbReference>
<dbReference type="SMR" id="A6V5Z4"/>
<dbReference type="KEGG" id="pap:PSPA7_3119"/>
<dbReference type="HOGENOM" id="CLU_044848_0_1_6"/>
<dbReference type="Proteomes" id="UP000001582">
    <property type="component" value="Chromosome"/>
</dbReference>
<dbReference type="GO" id="GO:0005524">
    <property type="term" value="F:ATP binding"/>
    <property type="evidence" value="ECO:0007669"/>
    <property type="project" value="UniProtKB-KW"/>
</dbReference>
<dbReference type="GO" id="GO:0004357">
    <property type="term" value="F:glutamate-cysteine ligase activity"/>
    <property type="evidence" value="ECO:0007669"/>
    <property type="project" value="UniProtKB-EC"/>
</dbReference>
<dbReference type="GO" id="GO:0042398">
    <property type="term" value="P:modified amino acid biosynthetic process"/>
    <property type="evidence" value="ECO:0007669"/>
    <property type="project" value="InterPro"/>
</dbReference>
<dbReference type="Gene3D" id="3.30.590.20">
    <property type="match status" value="1"/>
</dbReference>
<dbReference type="HAMAP" id="MF_01609">
    <property type="entry name" value="Glu_cys_ligase_2"/>
    <property type="match status" value="1"/>
</dbReference>
<dbReference type="InterPro" id="IPR050141">
    <property type="entry name" value="GCL_type2/YbdK_subfam"/>
</dbReference>
<dbReference type="InterPro" id="IPR006336">
    <property type="entry name" value="GCS2"/>
</dbReference>
<dbReference type="InterPro" id="IPR014746">
    <property type="entry name" value="Gln_synth/guanido_kin_cat_dom"/>
</dbReference>
<dbReference type="InterPro" id="IPR011793">
    <property type="entry name" value="YbdK"/>
</dbReference>
<dbReference type="NCBIfam" id="TIGR02050">
    <property type="entry name" value="gshA_cyan_rel"/>
    <property type="match status" value="1"/>
</dbReference>
<dbReference type="NCBIfam" id="NF010039">
    <property type="entry name" value="PRK13515.1"/>
    <property type="match status" value="1"/>
</dbReference>
<dbReference type="PANTHER" id="PTHR36510">
    <property type="entry name" value="GLUTAMATE--CYSTEINE LIGASE 2-RELATED"/>
    <property type="match status" value="1"/>
</dbReference>
<dbReference type="PANTHER" id="PTHR36510:SF1">
    <property type="entry name" value="GLUTAMATE--CYSTEINE LIGASE 2-RELATED"/>
    <property type="match status" value="1"/>
</dbReference>
<dbReference type="Pfam" id="PF04107">
    <property type="entry name" value="GCS2"/>
    <property type="match status" value="1"/>
</dbReference>
<dbReference type="SUPFAM" id="SSF55931">
    <property type="entry name" value="Glutamine synthetase/guanido kinase"/>
    <property type="match status" value="1"/>
</dbReference>
<keyword id="KW-0067">ATP-binding</keyword>
<keyword id="KW-0436">Ligase</keyword>
<keyword id="KW-0547">Nucleotide-binding</keyword>
<proteinExistence type="inferred from homology"/>
<sequence>MIDSRADHGLRFGIEEEFFLLDATDLDIARTAPSGFLEACRAALGEHFAEEMFECQVEVASPVFADLAQAARFHGRARQRLAQLAAGFGLRALCVGTHPFADWRRARSNPAAHFARLFEDQGRVARRSLVCGLHVHVEIPASHDRMVVLQQVLPWLPLLLALSASSPFRGGRRSGLASYRRALCGEWPRMNIPPALPDEDAYRRHLALLRESGCIREDGQVWWMVRPSSHVPTLELRICDACPRLADALCLAGLFRALVGQALLAGDAPAGPAARDACLEENYWQAMRHGCAGRYLVDGRCVNARDWLERAWRQCHPQARQGNEWAYGHAQRLLEENSADRQLQRYQALRAEGRGRQAALRRLVEELLEENLQALPAI</sequence>
<comment type="function">
    <text evidence="1">ATP-dependent carboxylate-amine ligase which exhibits weak glutamate--cysteine ligase activity.</text>
</comment>
<comment type="catalytic activity">
    <reaction evidence="1">
        <text>L-cysteine + L-glutamate + ATP = gamma-L-glutamyl-L-cysteine + ADP + phosphate + H(+)</text>
        <dbReference type="Rhea" id="RHEA:13285"/>
        <dbReference type="ChEBI" id="CHEBI:15378"/>
        <dbReference type="ChEBI" id="CHEBI:29985"/>
        <dbReference type="ChEBI" id="CHEBI:30616"/>
        <dbReference type="ChEBI" id="CHEBI:35235"/>
        <dbReference type="ChEBI" id="CHEBI:43474"/>
        <dbReference type="ChEBI" id="CHEBI:58173"/>
        <dbReference type="ChEBI" id="CHEBI:456216"/>
        <dbReference type="EC" id="6.3.2.2"/>
    </reaction>
</comment>
<comment type="similarity">
    <text evidence="1">Belongs to the glutamate--cysteine ligase type 2 family. YbdK subfamily.</text>
</comment>
<evidence type="ECO:0000255" key="1">
    <source>
        <dbReference type="HAMAP-Rule" id="MF_01609"/>
    </source>
</evidence>
<name>GCS2_PSEP7</name>
<feature type="chain" id="PRO_1000069442" description="Putative glutamate--cysteine ligase 2">
    <location>
        <begin position="1"/>
        <end position="378"/>
    </location>
</feature>
<gene>
    <name type="ordered locus">PSPA7_3119</name>
</gene>
<protein>
    <recommendedName>
        <fullName evidence="1">Putative glutamate--cysteine ligase 2</fullName>
        <ecNumber evidence="1">6.3.2.2</ecNumber>
    </recommendedName>
    <alternativeName>
        <fullName evidence="1">Gamma-glutamylcysteine synthetase 2</fullName>
        <shortName evidence="1">GCS 2</shortName>
        <shortName evidence="1">Gamma-GCS 2</shortName>
    </alternativeName>
</protein>
<accession>A6V5Z4</accession>
<reference key="1">
    <citation type="submission" date="2007-06" db="EMBL/GenBank/DDBJ databases">
        <authorList>
            <person name="Dodson R.J."/>
            <person name="Harkins D."/>
            <person name="Paulsen I.T."/>
        </authorList>
    </citation>
    <scope>NUCLEOTIDE SEQUENCE [LARGE SCALE GENOMIC DNA]</scope>
    <source>
        <strain>DSM 24068 / PA7</strain>
    </source>
</reference>